<reference key="1">
    <citation type="journal article" date="2002" name="Nucleic Acids Res.">
        <title>Genome sequence of Shigella flexneri 2a: insights into pathogenicity through comparison with genomes of Escherichia coli K12 and O157.</title>
        <authorList>
            <person name="Jin Q."/>
            <person name="Yuan Z."/>
            <person name="Xu J."/>
            <person name="Wang Y."/>
            <person name="Shen Y."/>
            <person name="Lu W."/>
            <person name="Wang J."/>
            <person name="Liu H."/>
            <person name="Yang J."/>
            <person name="Yang F."/>
            <person name="Zhang X."/>
            <person name="Zhang J."/>
            <person name="Yang G."/>
            <person name="Wu H."/>
            <person name="Qu D."/>
            <person name="Dong J."/>
            <person name="Sun L."/>
            <person name="Xue Y."/>
            <person name="Zhao A."/>
            <person name="Gao Y."/>
            <person name="Zhu J."/>
            <person name="Kan B."/>
            <person name="Ding K."/>
            <person name="Chen S."/>
            <person name="Cheng H."/>
            <person name="Yao Z."/>
            <person name="He B."/>
            <person name="Chen R."/>
            <person name="Ma D."/>
            <person name="Qiang B."/>
            <person name="Wen Y."/>
            <person name="Hou Y."/>
            <person name="Yu J."/>
        </authorList>
    </citation>
    <scope>NUCLEOTIDE SEQUENCE [LARGE SCALE GENOMIC DNA]</scope>
    <source>
        <strain>301 / Serotype 2a</strain>
    </source>
</reference>
<reference key="2">
    <citation type="journal article" date="2003" name="Infect. Immun.">
        <title>Complete genome sequence and comparative genomics of Shigella flexneri serotype 2a strain 2457T.</title>
        <authorList>
            <person name="Wei J."/>
            <person name="Goldberg M.B."/>
            <person name="Burland V."/>
            <person name="Venkatesan M.M."/>
            <person name="Deng W."/>
            <person name="Fournier G."/>
            <person name="Mayhew G.F."/>
            <person name="Plunkett G. III"/>
            <person name="Rose D.J."/>
            <person name="Darling A."/>
            <person name="Mau B."/>
            <person name="Perna N.T."/>
            <person name="Payne S.M."/>
            <person name="Runyen-Janecky L.J."/>
            <person name="Zhou S."/>
            <person name="Schwartz D.C."/>
            <person name="Blattner F.R."/>
        </authorList>
    </citation>
    <scope>NUCLEOTIDE SEQUENCE [LARGE SCALE GENOMIC DNA]</scope>
    <source>
        <strain>ATCC 700930 / 2457T / Serotype 2a</strain>
    </source>
</reference>
<evidence type="ECO:0000255" key="1">
    <source>
        <dbReference type="HAMAP-Rule" id="MF_01582"/>
    </source>
</evidence>
<sequence length="414" mass="43512">MTTQRSPGLFRRLAHGSLVKQILVGLVLGILLAWISKPAAEAVGLLGTLFVGALKAVAPILVLMLVMASIANHQHGQKTNIRPILFLYLLGTFSAALAAVVFSFAFPSTLHLSSSAGDISPPSGIVEVMRGLVMSMVSNPIDALLKGNYIGILVWAIGLGFALRHGNETTKNLVNDMSNAVTFMVKLVIRFAPFGIFGLVSSTLATTGFSTLWGYAQLLVVLVGCMLLVALVVNPLLVWWKIRRNPFPLVLLCLRESGVYAFFTRSSAANIPVNMALCEKLNLDRDTYSVSIPLGATINMAGAAITITVLTLAAVNTLGIPVDLPTALLLSVVASLCACGASGVAGGSLLLIPLACNMFGISNDIAMQVVAVGFIIGVLQDSCETALNSSTDVLFTAAACQAEDDRLANSALRN</sequence>
<gene>
    <name evidence="1" type="primary">sstT</name>
    <name type="ordered locus">SF3129</name>
    <name type="ordered locus">S3336</name>
</gene>
<protein>
    <recommendedName>
        <fullName evidence="1">Serine/threonine transporter SstT</fullName>
    </recommendedName>
    <alternativeName>
        <fullName evidence="1">Na(+)/serine-threonine symporter</fullName>
    </alternativeName>
</protein>
<feature type="initiator methionine" description="Removed" evidence="1">
    <location>
        <position position="1"/>
    </location>
</feature>
<feature type="chain" id="PRO_0000309131" description="Serine/threonine transporter SstT">
    <location>
        <begin position="2"/>
        <end position="414"/>
    </location>
</feature>
<feature type="topological domain" description="Cytoplasmic" evidence="1">
    <location>
        <begin position="2"/>
        <end position="15"/>
    </location>
</feature>
<feature type="transmembrane region" description="Helical" evidence="1">
    <location>
        <begin position="16"/>
        <end position="36"/>
    </location>
</feature>
<feature type="topological domain" description="Periplasmic" evidence="1">
    <location>
        <begin position="37"/>
        <end position="45"/>
    </location>
</feature>
<feature type="transmembrane region" description="Helical" evidence="1">
    <location>
        <begin position="46"/>
        <end position="66"/>
    </location>
</feature>
<feature type="topological domain" description="Cytoplasmic" evidence="1">
    <location>
        <begin position="67"/>
        <end position="83"/>
    </location>
</feature>
<feature type="transmembrane region" description="Helical" evidence="1">
    <location>
        <begin position="84"/>
        <end position="104"/>
    </location>
</feature>
<feature type="topological domain" description="Periplasmic" evidence="1">
    <location>
        <begin position="105"/>
        <end position="142"/>
    </location>
</feature>
<feature type="transmembrane region" description="Helical" evidence="1">
    <location>
        <begin position="143"/>
        <end position="163"/>
    </location>
</feature>
<feature type="topological domain" description="Cytoplasmic" evidence="1">
    <location>
        <begin position="164"/>
        <end position="179"/>
    </location>
</feature>
<feature type="transmembrane region" description="Helical" evidence="1">
    <location>
        <begin position="180"/>
        <end position="200"/>
    </location>
</feature>
<feature type="topological domain" description="Periplasmic" evidence="1">
    <location>
        <begin position="201"/>
        <end position="217"/>
    </location>
</feature>
<feature type="transmembrane region" description="Helical" evidence="1">
    <location>
        <begin position="218"/>
        <end position="238"/>
    </location>
</feature>
<feature type="topological domain" description="Cytoplasmic" evidence="1">
    <location>
        <begin position="239"/>
        <end position="299"/>
    </location>
</feature>
<feature type="transmembrane region" description="Helical" evidence="1">
    <location>
        <begin position="300"/>
        <end position="320"/>
    </location>
</feature>
<feature type="topological domain" description="Periplasmic" evidence="1">
    <location>
        <begin position="321"/>
        <end position="331"/>
    </location>
</feature>
<feature type="transmembrane region" description="Helical" evidence="1">
    <location>
        <begin position="332"/>
        <end position="352"/>
    </location>
</feature>
<feature type="topological domain" description="Cytoplasmic" evidence="1">
    <location>
        <begin position="353"/>
        <end position="414"/>
    </location>
</feature>
<name>SSTT_SHIFL</name>
<proteinExistence type="inferred from homology"/>
<dbReference type="EMBL" id="AE005674">
    <property type="protein sequence ID" value="AAN44601.1"/>
    <property type="molecule type" value="Genomic_DNA"/>
</dbReference>
<dbReference type="EMBL" id="AE014073">
    <property type="protein sequence ID" value="AAP18414.1"/>
    <property type="molecule type" value="Genomic_DNA"/>
</dbReference>
<dbReference type="RefSeq" id="WP_000211648.1">
    <property type="nucleotide sequence ID" value="NZ_WPGW01000031.1"/>
</dbReference>
<dbReference type="SMR" id="Q83Q34"/>
<dbReference type="STRING" id="198214.SF3129"/>
<dbReference type="PaxDb" id="198214-SF3129"/>
<dbReference type="KEGG" id="sfl:SF3129"/>
<dbReference type="KEGG" id="sfx:S3336"/>
<dbReference type="PATRIC" id="fig|198214.7.peg.3716"/>
<dbReference type="HOGENOM" id="CLU_044581_0_0_6"/>
<dbReference type="Proteomes" id="UP000001006">
    <property type="component" value="Chromosome"/>
</dbReference>
<dbReference type="Proteomes" id="UP000002673">
    <property type="component" value="Chromosome"/>
</dbReference>
<dbReference type="GO" id="GO:0005886">
    <property type="term" value="C:plasma membrane"/>
    <property type="evidence" value="ECO:0007669"/>
    <property type="project" value="UniProtKB-SubCell"/>
</dbReference>
<dbReference type="GO" id="GO:0005295">
    <property type="term" value="F:neutral L-amino acid:sodium symporter activity"/>
    <property type="evidence" value="ECO:0007669"/>
    <property type="project" value="TreeGrafter"/>
</dbReference>
<dbReference type="GO" id="GO:0032329">
    <property type="term" value="P:serine transport"/>
    <property type="evidence" value="ECO:0007669"/>
    <property type="project" value="InterPro"/>
</dbReference>
<dbReference type="GO" id="GO:0015826">
    <property type="term" value="P:threonine transport"/>
    <property type="evidence" value="ECO:0007669"/>
    <property type="project" value="InterPro"/>
</dbReference>
<dbReference type="FunFam" id="1.10.3860.10:FF:000003">
    <property type="entry name" value="Serine/threonine transporter sstT"/>
    <property type="match status" value="1"/>
</dbReference>
<dbReference type="Gene3D" id="1.10.3860.10">
    <property type="entry name" value="Sodium:dicarboxylate symporter"/>
    <property type="match status" value="1"/>
</dbReference>
<dbReference type="HAMAP" id="MF_01582">
    <property type="entry name" value="Ser_Thr_transp_SstT"/>
    <property type="match status" value="1"/>
</dbReference>
<dbReference type="InterPro" id="IPR001991">
    <property type="entry name" value="Na-dicarboxylate_symporter"/>
</dbReference>
<dbReference type="InterPro" id="IPR036458">
    <property type="entry name" value="Na:dicarbo_symporter_sf"/>
</dbReference>
<dbReference type="InterPro" id="IPR023025">
    <property type="entry name" value="Ser_Thr_transp_SstT"/>
</dbReference>
<dbReference type="NCBIfam" id="NF010151">
    <property type="entry name" value="PRK13628.1"/>
    <property type="match status" value="1"/>
</dbReference>
<dbReference type="PANTHER" id="PTHR42865">
    <property type="entry name" value="PROTON/GLUTAMATE-ASPARTATE SYMPORTER"/>
    <property type="match status" value="1"/>
</dbReference>
<dbReference type="PANTHER" id="PTHR42865:SF8">
    <property type="entry name" value="SERINE_THREONINE TRANSPORTER SSTT"/>
    <property type="match status" value="1"/>
</dbReference>
<dbReference type="Pfam" id="PF00375">
    <property type="entry name" value="SDF"/>
    <property type="match status" value="1"/>
</dbReference>
<dbReference type="PRINTS" id="PR00173">
    <property type="entry name" value="EDTRNSPORT"/>
</dbReference>
<dbReference type="SUPFAM" id="SSF118215">
    <property type="entry name" value="Proton glutamate symport protein"/>
    <property type="match status" value="1"/>
</dbReference>
<dbReference type="PROSITE" id="PS00713">
    <property type="entry name" value="NA_DICARBOXYL_SYMP_1"/>
    <property type="match status" value="1"/>
</dbReference>
<comment type="function">
    <text evidence="1">Involved in the import of serine and threonine into the cell, with the concomitant import of sodium (symport system).</text>
</comment>
<comment type="catalytic activity">
    <reaction evidence="1">
        <text>L-serine(in) + Na(+)(in) = L-serine(out) + Na(+)(out)</text>
        <dbReference type="Rhea" id="RHEA:29575"/>
        <dbReference type="ChEBI" id="CHEBI:29101"/>
        <dbReference type="ChEBI" id="CHEBI:33384"/>
    </reaction>
    <physiologicalReaction direction="right-to-left" evidence="1">
        <dbReference type="Rhea" id="RHEA:29577"/>
    </physiologicalReaction>
</comment>
<comment type="catalytic activity">
    <reaction evidence="1">
        <text>L-threonine(in) + Na(+)(in) = L-threonine(out) + Na(+)(out)</text>
        <dbReference type="Rhea" id="RHEA:69999"/>
        <dbReference type="ChEBI" id="CHEBI:29101"/>
        <dbReference type="ChEBI" id="CHEBI:57926"/>
    </reaction>
    <physiologicalReaction direction="right-to-left" evidence="1">
        <dbReference type="Rhea" id="RHEA:70001"/>
    </physiologicalReaction>
</comment>
<comment type="subcellular location">
    <subcellularLocation>
        <location evidence="1">Cell inner membrane</location>
        <topology evidence="1">Multi-pass membrane protein</topology>
    </subcellularLocation>
</comment>
<comment type="similarity">
    <text evidence="1">Belongs to the dicarboxylate/amino acid:cation symporter (DAACS) (TC 2.A.23) family.</text>
</comment>
<keyword id="KW-0029">Amino-acid transport</keyword>
<keyword id="KW-0997">Cell inner membrane</keyword>
<keyword id="KW-1003">Cell membrane</keyword>
<keyword id="KW-0472">Membrane</keyword>
<keyword id="KW-1185">Reference proteome</keyword>
<keyword id="KW-0769">Symport</keyword>
<keyword id="KW-0812">Transmembrane</keyword>
<keyword id="KW-1133">Transmembrane helix</keyword>
<keyword id="KW-0813">Transport</keyword>
<organism>
    <name type="scientific">Shigella flexneri</name>
    <dbReference type="NCBI Taxonomy" id="623"/>
    <lineage>
        <taxon>Bacteria</taxon>
        <taxon>Pseudomonadati</taxon>
        <taxon>Pseudomonadota</taxon>
        <taxon>Gammaproteobacteria</taxon>
        <taxon>Enterobacterales</taxon>
        <taxon>Enterobacteriaceae</taxon>
        <taxon>Shigella</taxon>
    </lineage>
</organism>
<accession>Q83Q34</accession>
<accession>Q7BZU2</accession>